<comment type="function">
    <text evidence="1">Catalyzes the condensation of pantoate with beta-alanine in an ATP-dependent reaction via a pantoyl-adenylate intermediate.</text>
</comment>
<comment type="catalytic activity">
    <reaction evidence="1">
        <text>(R)-pantoate + beta-alanine + ATP = (R)-pantothenate + AMP + diphosphate + H(+)</text>
        <dbReference type="Rhea" id="RHEA:10912"/>
        <dbReference type="ChEBI" id="CHEBI:15378"/>
        <dbReference type="ChEBI" id="CHEBI:15980"/>
        <dbReference type="ChEBI" id="CHEBI:29032"/>
        <dbReference type="ChEBI" id="CHEBI:30616"/>
        <dbReference type="ChEBI" id="CHEBI:33019"/>
        <dbReference type="ChEBI" id="CHEBI:57966"/>
        <dbReference type="ChEBI" id="CHEBI:456215"/>
        <dbReference type="EC" id="6.3.2.1"/>
    </reaction>
</comment>
<comment type="pathway">
    <text evidence="1">Cofactor biosynthesis; (R)-pantothenate biosynthesis; (R)-pantothenate from (R)-pantoate and beta-alanine: step 1/1.</text>
</comment>
<comment type="subunit">
    <text evidence="1">Homodimer.</text>
</comment>
<comment type="subcellular location">
    <subcellularLocation>
        <location evidence="1">Cytoplasm</location>
    </subcellularLocation>
</comment>
<comment type="miscellaneous">
    <text evidence="1">The reaction proceeds by a bi uni uni bi ping pong mechanism.</text>
</comment>
<comment type="similarity">
    <text evidence="1">Belongs to the pantothenate synthetase family.</text>
</comment>
<reference key="1">
    <citation type="journal article" date="2010" name="PLoS ONE">
        <title>Genome sequence of Cronobacter sakazakii BAA-894 and comparative genomic hybridization analysis with other Cronobacter species.</title>
        <authorList>
            <person name="Kucerova E."/>
            <person name="Clifton S.W."/>
            <person name="Xia X.Q."/>
            <person name="Long F."/>
            <person name="Porwollik S."/>
            <person name="Fulton L."/>
            <person name="Fronick C."/>
            <person name="Minx P."/>
            <person name="Kyung K."/>
            <person name="Warren W."/>
            <person name="Fulton R."/>
            <person name="Feng D."/>
            <person name="Wollam A."/>
            <person name="Shah N."/>
            <person name="Bhonagiri V."/>
            <person name="Nash W.E."/>
            <person name="Hallsworth-Pepin K."/>
            <person name="Wilson R.K."/>
            <person name="McClelland M."/>
            <person name="Forsythe S.J."/>
        </authorList>
    </citation>
    <scope>NUCLEOTIDE SEQUENCE [LARGE SCALE GENOMIC DNA]</scope>
    <source>
        <strain>ATCC BAA-894</strain>
    </source>
</reference>
<feature type="chain" id="PRO_1000097066" description="Pantothenate synthetase">
    <location>
        <begin position="1"/>
        <end position="284"/>
    </location>
</feature>
<feature type="active site" description="Proton donor" evidence="1">
    <location>
        <position position="37"/>
    </location>
</feature>
<feature type="binding site" evidence="1">
    <location>
        <begin position="30"/>
        <end position="37"/>
    </location>
    <ligand>
        <name>ATP</name>
        <dbReference type="ChEBI" id="CHEBI:30616"/>
    </ligand>
</feature>
<feature type="binding site" evidence="1">
    <location>
        <position position="61"/>
    </location>
    <ligand>
        <name>(R)-pantoate</name>
        <dbReference type="ChEBI" id="CHEBI:15980"/>
    </ligand>
</feature>
<feature type="binding site" evidence="1">
    <location>
        <position position="61"/>
    </location>
    <ligand>
        <name>beta-alanine</name>
        <dbReference type="ChEBI" id="CHEBI:57966"/>
    </ligand>
</feature>
<feature type="binding site" evidence="1">
    <location>
        <begin position="149"/>
        <end position="152"/>
    </location>
    <ligand>
        <name>ATP</name>
        <dbReference type="ChEBI" id="CHEBI:30616"/>
    </ligand>
</feature>
<feature type="binding site" evidence="1">
    <location>
        <position position="155"/>
    </location>
    <ligand>
        <name>(R)-pantoate</name>
        <dbReference type="ChEBI" id="CHEBI:15980"/>
    </ligand>
</feature>
<feature type="binding site" evidence="1">
    <location>
        <position position="178"/>
    </location>
    <ligand>
        <name>ATP</name>
        <dbReference type="ChEBI" id="CHEBI:30616"/>
    </ligand>
</feature>
<feature type="binding site" evidence="1">
    <location>
        <begin position="186"/>
        <end position="189"/>
    </location>
    <ligand>
        <name>ATP</name>
        <dbReference type="ChEBI" id="CHEBI:30616"/>
    </ligand>
</feature>
<protein>
    <recommendedName>
        <fullName evidence="1">Pantothenate synthetase</fullName>
        <shortName evidence="1">PS</shortName>
        <ecNumber evidence="1">6.3.2.1</ecNumber>
    </recommendedName>
    <alternativeName>
        <fullName evidence="1">Pantoate--beta-alanine ligase</fullName>
    </alternativeName>
    <alternativeName>
        <fullName evidence="1">Pantoate-activating enzyme</fullName>
    </alternativeName>
</protein>
<gene>
    <name evidence="1" type="primary">panC</name>
    <name type="ordered locus">ESA_03201</name>
</gene>
<sequence length="284" mass="31374">MLIIETVPLLRQQIRRLRMEGKRIALVPTMGNLHDGHMKLVDEAKASADAVVVSIFVNPMQFDRADDLARYPRTLQEDCEKLKKRGADFVFAPTPEEVYPQGMSDQTYVDVPGLSTMLEGASRPGHFRGVSTVVSKLFNLVQPDVACFGEKDYQQLALIRKMTADMGYDIEIIGVPTVRAKDGLALSSRNGYLTSDQRKIAPGLSKVMNTMAEKLRAGERDLEAIIAAASEALSEKGFRPDDLQIRDADTLQALSPASQRAVILMAAWLGQARLIDNQTVELTQ</sequence>
<evidence type="ECO:0000255" key="1">
    <source>
        <dbReference type="HAMAP-Rule" id="MF_00158"/>
    </source>
</evidence>
<keyword id="KW-0067">ATP-binding</keyword>
<keyword id="KW-0963">Cytoplasm</keyword>
<keyword id="KW-0436">Ligase</keyword>
<keyword id="KW-0547">Nucleotide-binding</keyword>
<keyword id="KW-0566">Pantothenate biosynthesis</keyword>
<keyword id="KW-1185">Reference proteome</keyword>
<dbReference type="EC" id="6.3.2.1" evidence="1"/>
<dbReference type="EMBL" id="CP000783">
    <property type="protein sequence ID" value="ABU78423.1"/>
    <property type="molecule type" value="Genomic_DNA"/>
</dbReference>
<dbReference type="RefSeq" id="WP_012125733.1">
    <property type="nucleotide sequence ID" value="NC_009778.1"/>
</dbReference>
<dbReference type="SMR" id="A7MGP7"/>
<dbReference type="KEGG" id="esa:ESA_03201"/>
<dbReference type="PATRIC" id="fig|290339.8.peg.2831"/>
<dbReference type="HOGENOM" id="CLU_047148_0_0_6"/>
<dbReference type="UniPathway" id="UPA00028">
    <property type="reaction ID" value="UER00005"/>
</dbReference>
<dbReference type="Proteomes" id="UP000000260">
    <property type="component" value="Chromosome"/>
</dbReference>
<dbReference type="GO" id="GO:0005829">
    <property type="term" value="C:cytosol"/>
    <property type="evidence" value="ECO:0007669"/>
    <property type="project" value="TreeGrafter"/>
</dbReference>
<dbReference type="GO" id="GO:0005524">
    <property type="term" value="F:ATP binding"/>
    <property type="evidence" value="ECO:0007669"/>
    <property type="project" value="UniProtKB-KW"/>
</dbReference>
<dbReference type="GO" id="GO:0004592">
    <property type="term" value="F:pantoate-beta-alanine ligase activity"/>
    <property type="evidence" value="ECO:0007669"/>
    <property type="project" value="UniProtKB-UniRule"/>
</dbReference>
<dbReference type="GO" id="GO:0015940">
    <property type="term" value="P:pantothenate biosynthetic process"/>
    <property type="evidence" value="ECO:0007669"/>
    <property type="project" value="UniProtKB-UniRule"/>
</dbReference>
<dbReference type="CDD" id="cd00560">
    <property type="entry name" value="PanC"/>
    <property type="match status" value="1"/>
</dbReference>
<dbReference type="FunFam" id="3.30.1300.10:FF:000001">
    <property type="entry name" value="Pantothenate synthetase"/>
    <property type="match status" value="1"/>
</dbReference>
<dbReference type="FunFam" id="3.40.50.620:FF:000013">
    <property type="entry name" value="Pantothenate synthetase"/>
    <property type="match status" value="1"/>
</dbReference>
<dbReference type="Gene3D" id="3.40.50.620">
    <property type="entry name" value="HUPs"/>
    <property type="match status" value="1"/>
</dbReference>
<dbReference type="Gene3D" id="3.30.1300.10">
    <property type="entry name" value="Pantoate-beta-alanine ligase, C-terminal domain"/>
    <property type="match status" value="1"/>
</dbReference>
<dbReference type="HAMAP" id="MF_00158">
    <property type="entry name" value="PanC"/>
    <property type="match status" value="1"/>
</dbReference>
<dbReference type="InterPro" id="IPR004821">
    <property type="entry name" value="Cyt_trans-like"/>
</dbReference>
<dbReference type="InterPro" id="IPR003721">
    <property type="entry name" value="Pantoate_ligase"/>
</dbReference>
<dbReference type="InterPro" id="IPR042176">
    <property type="entry name" value="Pantoate_ligase_C"/>
</dbReference>
<dbReference type="InterPro" id="IPR014729">
    <property type="entry name" value="Rossmann-like_a/b/a_fold"/>
</dbReference>
<dbReference type="NCBIfam" id="TIGR00125">
    <property type="entry name" value="cyt_tran_rel"/>
    <property type="match status" value="1"/>
</dbReference>
<dbReference type="NCBIfam" id="TIGR00018">
    <property type="entry name" value="panC"/>
    <property type="match status" value="1"/>
</dbReference>
<dbReference type="PANTHER" id="PTHR21299">
    <property type="entry name" value="CYTIDYLATE KINASE/PANTOATE-BETA-ALANINE LIGASE"/>
    <property type="match status" value="1"/>
</dbReference>
<dbReference type="PANTHER" id="PTHR21299:SF1">
    <property type="entry name" value="PANTOATE--BETA-ALANINE LIGASE"/>
    <property type="match status" value="1"/>
</dbReference>
<dbReference type="Pfam" id="PF02569">
    <property type="entry name" value="Pantoate_ligase"/>
    <property type="match status" value="1"/>
</dbReference>
<dbReference type="SUPFAM" id="SSF52374">
    <property type="entry name" value="Nucleotidylyl transferase"/>
    <property type="match status" value="1"/>
</dbReference>
<accession>A7MGP7</accession>
<name>PANC_CROS8</name>
<proteinExistence type="inferred from homology"/>
<organism>
    <name type="scientific">Cronobacter sakazakii (strain ATCC BAA-894)</name>
    <name type="common">Enterobacter sakazakii</name>
    <dbReference type="NCBI Taxonomy" id="290339"/>
    <lineage>
        <taxon>Bacteria</taxon>
        <taxon>Pseudomonadati</taxon>
        <taxon>Pseudomonadota</taxon>
        <taxon>Gammaproteobacteria</taxon>
        <taxon>Enterobacterales</taxon>
        <taxon>Enterobacteriaceae</taxon>
        <taxon>Cronobacter</taxon>
    </lineage>
</organism>